<feature type="chain" id="PRO_0000317594" description="Mitochondrial adenyl nucleotide antiporter SLC25A24">
    <location>
        <begin position="1"/>
        <end position="477"/>
    </location>
</feature>
<feature type="topological domain" description="Mitochondrial intermembrane" evidence="15">
    <location>
        <begin position="1"/>
        <end position="197"/>
    </location>
</feature>
<feature type="transmembrane region" description="Helical; Name=1" evidence="2">
    <location>
        <begin position="198"/>
        <end position="215"/>
    </location>
</feature>
<feature type="topological domain" description="Mitochondrial matrix" evidence="15">
    <location>
        <begin position="216"/>
        <end position="252"/>
    </location>
</feature>
<feature type="transmembrane region" description="Helical; Name=2" evidence="2">
    <location>
        <begin position="253"/>
        <end position="272"/>
    </location>
</feature>
<feature type="topological domain" description="Mitochondrial intermembrane" evidence="15">
    <location>
        <begin position="273"/>
        <end position="295"/>
    </location>
</feature>
<feature type="transmembrane region" description="Helical; Name=3" evidence="2">
    <location>
        <begin position="296"/>
        <end position="309"/>
    </location>
</feature>
<feature type="topological domain" description="Mitochondrial matrix" evidence="15">
    <location>
        <begin position="310"/>
        <end position="345"/>
    </location>
</feature>
<feature type="transmembrane region" description="Helical; Name=4" evidence="2">
    <location>
        <begin position="346"/>
        <end position="365"/>
    </location>
</feature>
<feature type="topological domain" description="Mitochondrial intermembrane" evidence="15">
    <location>
        <begin position="366"/>
        <end position="388"/>
    </location>
</feature>
<feature type="transmembrane region" description="Helical; Name=5" evidence="2">
    <location>
        <begin position="389"/>
        <end position="406"/>
    </location>
</feature>
<feature type="topological domain" description="Mitochondrial matrix" evidence="15">
    <location>
        <begin position="407"/>
        <end position="445"/>
    </location>
</feature>
<feature type="transmembrane region" description="Helical; Name=6" evidence="2">
    <location>
        <begin position="446"/>
        <end position="465"/>
    </location>
</feature>
<feature type="topological domain" description="Mitochondrial intermembrane" evidence="15">
    <location>
        <begin position="466"/>
        <end position="477"/>
    </location>
</feature>
<feature type="domain" description="EF-hand 1" evidence="4">
    <location>
        <begin position="19"/>
        <end position="54"/>
    </location>
</feature>
<feature type="domain" description="EF-hand 2" evidence="4">
    <location>
        <begin position="55"/>
        <end position="88"/>
    </location>
</feature>
<feature type="domain" description="EF-hand 3" evidence="4">
    <location>
        <begin position="86"/>
        <end position="121"/>
    </location>
</feature>
<feature type="domain" description="EF-hand 4" evidence="4">
    <location>
        <begin position="122"/>
        <end position="157"/>
    </location>
</feature>
<feature type="repeat" description="Solcar 1" evidence="3">
    <location>
        <begin position="192"/>
        <end position="278"/>
    </location>
</feature>
<feature type="repeat" description="Solcar 2" evidence="3">
    <location>
        <begin position="286"/>
        <end position="371"/>
    </location>
</feature>
<feature type="repeat" description="Solcar 3" evidence="3">
    <location>
        <begin position="383"/>
        <end position="471"/>
    </location>
</feature>
<feature type="region of interest" description="Regulatory N-terminal domain" evidence="8 9">
    <location>
        <begin position="1"/>
        <end position="173"/>
    </location>
</feature>
<feature type="region of interest" description="Linker region" evidence="8">
    <location>
        <begin position="159"/>
        <end position="168"/>
    </location>
</feature>
<feature type="region of interest" description="C-terminal transmembrane transporter domain" evidence="8">
    <location>
        <begin position="174"/>
        <end position="477"/>
    </location>
</feature>
<feature type="binding site" evidence="4 8 9 19 20 21">
    <location>
        <position position="32"/>
    </location>
    <ligand>
        <name>Ca(2+)</name>
        <dbReference type="ChEBI" id="CHEBI:29108"/>
        <label>1</label>
    </ligand>
</feature>
<feature type="binding site" evidence="4 8 9 19 20 21">
    <location>
        <position position="34"/>
    </location>
    <ligand>
        <name>Ca(2+)</name>
        <dbReference type="ChEBI" id="CHEBI:29108"/>
        <label>1</label>
    </ligand>
</feature>
<feature type="binding site" evidence="4 8 9 19 20 21">
    <location>
        <position position="36"/>
    </location>
    <ligand>
        <name>Ca(2+)</name>
        <dbReference type="ChEBI" id="CHEBI:29108"/>
        <label>1</label>
    </ligand>
</feature>
<feature type="binding site" evidence="8 9 19 20 21">
    <location>
        <position position="38"/>
    </location>
    <ligand>
        <name>Ca(2+)</name>
        <dbReference type="ChEBI" id="CHEBI:29108"/>
        <label>1</label>
    </ligand>
</feature>
<feature type="binding site" evidence="4 8 9 20 21">
    <location>
        <position position="43"/>
    </location>
    <ligand>
        <name>Ca(2+)</name>
        <dbReference type="ChEBI" id="CHEBI:29108"/>
        <label>1</label>
    </ligand>
</feature>
<feature type="binding site" evidence="4 8 9 19 20 21">
    <location>
        <position position="68"/>
    </location>
    <ligand>
        <name>Ca(2+)</name>
        <dbReference type="ChEBI" id="CHEBI:29108"/>
        <label>2</label>
    </ligand>
</feature>
<feature type="binding site" evidence="4 8 9 19 20 21">
    <location>
        <position position="70"/>
    </location>
    <ligand>
        <name>Ca(2+)</name>
        <dbReference type="ChEBI" id="CHEBI:29108"/>
        <label>2</label>
    </ligand>
</feature>
<feature type="binding site" evidence="4 8 9 19 20 21">
    <location>
        <position position="72"/>
    </location>
    <ligand>
        <name>Ca(2+)</name>
        <dbReference type="ChEBI" id="CHEBI:29108"/>
        <label>2</label>
    </ligand>
</feature>
<feature type="binding site" evidence="4 8 9 19 20 21">
    <location>
        <position position="74"/>
    </location>
    <ligand>
        <name>Ca(2+)</name>
        <dbReference type="ChEBI" id="CHEBI:29108"/>
        <label>2</label>
    </ligand>
</feature>
<feature type="binding site" evidence="4 8 9 19 21">
    <location>
        <position position="79"/>
    </location>
    <ligand>
        <name>Ca(2+)</name>
        <dbReference type="ChEBI" id="CHEBI:29108"/>
        <label>2</label>
    </ligand>
</feature>
<feature type="binding site" evidence="4 8 9 19 20 21">
    <location>
        <position position="99"/>
    </location>
    <ligand>
        <name>Ca(2+)</name>
        <dbReference type="ChEBI" id="CHEBI:29108"/>
        <label>3</label>
    </ligand>
</feature>
<feature type="binding site" evidence="4 8 9 19 20 21">
    <location>
        <position position="101"/>
    </location>
    <ligand>
        <name>Ca(2+)</name>
        <dbReference type="ChEBI" id="CHEBI:29108"/>
        <label>3</label>
    </ligand>
</feature>
<feature type="binding site" evidence="4 8 9 19 20 21">
    <location>
        <position position="103"/>
    </location>
    <ligand>
        <name>Ca(2+)</name>
        <dbReference type="ChEBI" id="CHEBI:29108"/>
        <label>3</label>
    </ligand>
</feature>
<feature type="binding site" evidence="4 8 9 19 20 21">
    <location>
        <position position="105"/>
    </location>
    <ligand>
        <name>Ca(2+)</name>
        <dbReference type="ChEBI" id="CHEBI:29108"/>
        <label>3</label>
    </ligand>
</feature>
<feature type="binding site" evidence="4 8 9 19 20 21">
    <location>
        <position position="110"/>
    </location>
    <ligand>
        <name>Ca(2+)</name>
        <dbReference type="ChEBI" id="CHEBI:29108"/>
        <label>3</label>
    </ligand>
</feature>
<feature type="binding site" evidence="8 9 19 20 21">
    <location>
        <position position="135"/>
    </location>
    <ligand>
        <name>Ca(2+)</name>
        <dbReference type="ChEBI" id="CHEBI:29108"/>
        <label>4</label>
    </ligand>
</feature>
<feature type="binding site" evidence="8 9 19 20 21">
    <location>
        <position position="137"/>
    </location>
    <ligand>
        <name>Ca(2+)</name>
        <dbReference type="ChEBI" id="CHEBI:29108"/>
        <label>4</label>
    </ligand>
</feature>
<feature type="binding site" evidence="8 9 19 20 21">
    <location>
        <position position="139"/>
    </location>
    <ligand>
        <name>Ca(2+)</name>
        <dbReference type="ChEBI" id="CHEBI:29108"/>
        <label>4</label>
    </ligand>
</feature>
<feature type="binding site" evidence="8 9 19 20 21">
    <location>
        <position position="141"/>
    </location>
    <ligand>
        <name>Ca(2+)</name>
        <dbReference type="ChEBI" id="CHEBI:29108"/>
        <label>4</label>
    </ligand>
</feature>
<feature type="binding site" evidence="8 9 19 20 21">
    <location>
        <position position="146"/>
    </location>
    <ligand>
        <name>Ca(2+)</name>
        <dbReference type="ChEBI" id="CHEBI:29108"/>
        <label>4</label>
    </ligand>
</feature>
<feature type="modified residue" description="N6-acetyllysine; alternate" evidence="1">
    <location>
        <position position="320"/>
    </location>
</feature>
<feature type="modified residue" description="N6-succinyllysine; alternate" evidence="1">
    <location>
        <position position="320"/>
    </location>
</feature>
<feature type="modified residue" description="N6-acetyllysine" evidence="22">
    <location>
        <position position="336"/>
    </location>
</feature>
<feature type="modified residue" description="N6-acetyllysine; alternate" evidence="22">
    <location>
        <position position="437"/>
    </location>
</feature>
<feature type="modified residue" description="N6-succinyllysine; alternate" evidence="1">
    <location>
        <position position="437"/>
    </location>
</feature>
<feature type="splice variant" id="VSP_031066" description="In isoform 2." evidence="11 13">
    <original>MLRWLRDFVLPTAACQDAEQPTRYETLFQALDRNGDGVVDIGELQEGLRNLGIPLGQDAEE</original>
    <variation>MDSLYGDLFWYLDYNKDGTLDIFELQEGLEDVGAIQSLEEAK</variation>
    <location>
        <begin position="1"/>
        <end position="61"/>
    </location>
</feature>
<feature type="sequence variant" id="VAR_080617" description="In FPS; dbSNP:rs1553253990." evidence="10">
    <original>R</original>
    <variation>C</variation>
    <location>
        <position position="217"/>
    </location>
</feature>
<feature type="sequence variant" id="VAR_080618" description="In FPS; no effect on protein abundance; no effect on localization to the mitochondrion; altered mitochondrial ATP transport; increased sensitivity to oxidative stress that leads to mitochondrial swelling; dbSNP:rs1553253989." evidence="10">
    <original>R</original>
    <variation>H</variation>
    <location>
        <position position="217"/>
    </location>
</feature>
<feature type="sequence conflict" description="In Ref. 6; AAH68561." evidence="14" ref="6">
    <original>L</original>
    <variation>P</variation>
    <location>
        <position position="75"/>
    </location>
</feature>
<feature type="helix" evidence="23">
    <location>
        <begin position="24"/>
        <end position="31"/>
    </location>
</feature>
<feature type="strand" evidence="23">
    <location>
        <begin position="36"/>
        <end position="39"/>
    </location>
</feature>
<feature type="helix" evidence="23">
    <location>
        <begin position="41"/>
        <end position="49"/>
    </location>
</feature>
<feature type="turn" evidence="23">
    <location>
        <begin position="50"/>
        <end position="52"/>
    </location>
</feature>
<feature type="helix" evidence="23">
    <location>
        <begin position="59"/>
        <end position="67"/>
    </location>
</feature>
<feature type="strand" evidence="23">
    <location>
        <begin position="72"/>
        <end position="75"/>
    </location>
</feature>
<feature type="helix" evidence="23">
    <location>
        <begin position="77"/>
        <end position="98"/>
    </location>
</feature>
<feature type="strand" evidence="24">
    <location>
        <begin position="103"/>
        <end position="106"/>
    </location>
</feature>
<feature type="helix" evidence="23">
    <location>
        <begin position="108"/>
        <end position="117"/>
    </location>
</feature>
<feature type="helix" evidence="23">
    <location>
        <begin position="124"/>
        <end position="134"/>
    </location>
</feature>
<feature type="strand" evidence="23">
    <location>
        <begin position="136"/>
        <end position="138"/>
    </location>
</feature>
<feature type="strand" evidence="23">
    <location>
        <begin position="140"/>
        <end position="142"/>
    </location>
</feature>
<feature type="helix" evidence="23">
    <location>
        <begin position="144"/>
        <end position="151"/>
    </location>
</feature>
<feature type="helix" evidence="23">
    <location>
        <begin position="159"/>
        <end position="168"/>
    </location>
</feature>
<evidence type="ECO:0000250" key="1">
    <source>
        <dbReference type="UniProtKB" id="Q8BMD8"/>
    </source>
</evidence>
<evidence type="ECO:0000255" key="2"/>
<evidence type="ECO:0000255" key="3">
    <source>
        <dbReference type="PROSITE-ProRule" id="PRU00282"/>
    </source>
</evidence>
<evidence type="ECO:0000255" key="4">
    <source>
        <dbReference type="PROSITE-ProRule" id="PRU00448"/>
    </source>
</evidence>
<evidence type="ECO:0000269" key="5">
    <source>
    </source>
</evidence>
<evidence type="ECO:0000269" key="6">
    <source>
    </source>
</evidence>
<evidence type="ECO:0000269" key="7">
    <source>
    </source>
</evidence>
<evidence type="ECO:0000269" key="8">
    <source>
    </source>
</evidence>
<evidence type="ECO:0000269" key="9">
    <source>
    </source>
</evidence>
<evidence type="ECO:0000269" key="10">
    <source>
    </source>
</evidence>
<evidence type="ECO:0000303" key="11">
    <source>
    </source>
</evidence>
<evidence type="ECO:0000303" key="12">
    <source>
    </source>
</evidence>
<evidence type="ECO:0000303" key="13">
    <source>
    </source>
</evidence>
<evidence type="ECO:0000305" key="14"/>
<evidence type="ECO:0000305" key="15">
    <source>
    </source>
</evidence>
<evidence type="ECO:0000305" key="16">
    <source>
    </source>
</evidence>
<evidence type="ECO:0000305" key="17">
    <source>
    </source>
</evidence>
<evidence type="ECO:0000312" key="18">
    <source>
        <dbReference type="HGNC" id="HGNC:20662"/>
    </source>
</evidence>
<evidence type="ECO:0007744" key="19">
    <source>
        <dbReference type="PDB" id="4N5X"/>
    </source>
</evidence>
<evidence type="ECO:0007744" key="20">
    <source>
        <dbReference type="PDB" id="4ZCU"/>
    </source>
</evidence>
<evidence type="ECO:0007744" key="21">
    <source>
        <dbReference type="PDB" id="4ZCV"/>
    </source>
</evidence>
<evidence type="ECO:0007744" key="22">
    <source>
    </source>
</evidence>
<evidence type="ECO:0007829" key="23">
    <source>
        <dbReference type="PDB" id="4N5X"/>
    </source>
</evidence>
<evidence type="ECO:0007829" key="24">
    <source>
        <dbReference type="PDB" id="4ZCU"/>
    </source>
</evidence>
<gene>
    <name evidence="18" type="primary">SLC25A24</name>
    <name evidence="13" type="synonym">APC1</name>
    <name type="synonym">MCSC1</name>
    <name type="synonym">SCAMC1</name>
</gene>
<reference key="1">
    <citation type="journal article" date="2004" name="J. Biol. Chem.">
        <title>Identification of a novel human subfamily of mitochondrial carriers with calcium-binding domains.</title>
        <authorList>
            <person name="del Arco A."/>
            <person name="Satrustegui J."/>
        </authorList>
    </citation>
    <scope>NUCLEOTIDE SEQUENCE [MRNA] (ISOFORM 1)</scope>
    <scope>SUBCELLULAR LOCATION</scope>
    <scope>TISSUE SPECIFICITY</scope>
</reference>
<reference key="2">
    <citation type="journal article" date="2004" name="J. Biol. Chem.">
        <title>Identification of the mitochondrial ATP-Mg/Pi transporter. Bacterial expression, reconstitution, functional characterization, and tissue distribution.</title>
        <authorList>
            <person name="Fiermonte G."/>
            <person name="De Leonardis F."/>
            <person name="Todisco S."/>
            <person name="Palmieri L."/>
            <person name="Lasorsa F.M."/>
            <person name="Palmieri F."/>
        </authorList>
    </citation>
    <scope>NUCLEOTIDE SEQUENCE [MRNA] (ISOFORM 2)</scope>
    <scope>FUNCTION</scope>
    <scope>TRANSPORTER ACTIVITY</scope>
    <scope>BIOPHYSICOCHEMICAL PROPERTIES</scope>
    <scope>ACTIVITY REGULATION</scope>
    <scope>SUBCELLULAR LOCATION</scope>
    <scope>TOPOLOGY</scope>
    <scope>TISSUE SPECIFICITY</scope>
    <source>
        <tissue>Testis</tissue>
    </source>
</reference>
<reference key="3">
    <citation type="journal article" date="2004" name="Nat. Genet.">
        <title>Complete sequencing and characterization of 21,243 full-length human cDNAs.</title>
        <authorList>
            <person name="Ota T."/>
            <person name="Suzuki Y."/>
            <person name="Nishikawa T."/>
            <person name="Otsuki T."/>
            <person name="Sugiyama T."/>
            <person name="Irie R."/>
            <person name="Wakamatsu A."/>
            <person name="Hayashi K."/>
            <person name="Sato H."/>
            <person name="Nagai K."/>
            <person name="Kimura K."/>
            <person name="Makita H."/>
            <person name="Sekine M."/>
            <person name="Obayashi M."/>
            <person name="Nishi T."/>
            <person name="Shibahara T."/>
            <person name="Tanaka T."/>
            <person name="Ishii S."/>
            <person name="Yamamoto J."/>
            <person name="Saito K."/>
            <person name="Kawai Y."/>
            <person name="Isono Y."/>
            <person name="Nakamura Y."/>
            <person name="Nagahari K."/>
            <person name="Murakami K."/>
            <person name="Yasuda T."/>
            <person name="Iwayanagi T."/>
            <person name="Wagatsuma M."/>
            <person name="Shiratori A."/>
            <person name="Sudo H."/>
            <person name="Hosoiri T."/>
            <person name="Kaku Y."/>
            <person name="Kodaira H."/>
            <person name="Kondo H."/>
            <person name="Sugawara M."/>
            <person name="Takahashi M."/>
            <person name="Kanda K."/>
            <person name="Yokoi T."/>
            <person name="Furuya T."/>
            <person name="Kikkawa E."/>
            <person name="Omura Y."/>
            <person name="Abe K."/>
            <person name="Kamihara K."/>
            <person name="Katsuta N."/>
            <person name="Sato K."/>
            <person name="Tanikawa M."/>
            <person name="Yamazaki M."/>
            <person name="Ninomiya K."/>
            <person name="Ishibashi T."/>
            <person name="Yamashita H."/>
            <person name="Murakawa K."/>
            <person name="Fujimori K."/>
            <person name="Tanai H."/>
            <person name="Kimata M."/>
            <person name="Watanabe M."/>
            <person name="Hiraoka S."/>
            <person name="Chiba Y."/>
            <person name="Ishida S."/>
            <person name="Ono Y."/>
            <person name="Takiguchi S."/>
            <person name="Watanabe S."/>
            <person name="Yosida M."/>
            <person name="Hotuta T."/>
            <person name="Kusano J."/>
            <person name="Kanehori K."/>
            <person name="Takahashi-Fujii A."/>
            <person name="Hara H."/>
            <person name="Tanase T.-O."/>
            <person name="Nomura Y."/>
            <person name="Togiya S."/>
            <person name="Komai F."/>
            <person name="Hara R."/>
            <person name="Takeuchi K."/>
            <person name="Arita M."/>
            <person name="Imose N."/>
            <person name="Musashino K."/>
            <person name="Yuuki H."/>
            <person name="Oshima A."/>
            <person name="Sasaki N."/>
            <person name="Aotsuka S."/>
            <person name="Yoshikawa Y."/>
            <person name="Matsunawa H."/>
            <person name="Ichihara T."/>
            <person name="Shiohata N."/>
            <person name="Sano S."/>
            <person name="Moriya S."/>
            <person name="Momiyama H."/>
            <person name="Satoh N."/>
            <person name="Takami S."/>
            <person name="Terashima Y."/>
            <person name="Suzuki O."/>
            <person name="Nakagawa S."/>
            <person name="Senoh A."/>
            <person name="Mizoguchi H."/>
            <person name="Goto Y."/>
            <person name="Shimizu F."/>
            <person name="Wakebe H."/>
            <person name="Hishigaki H."/>
            <person name="Watanabe T."/>
            <person name="Sugiyama A."/>
            <person name="Takemoto M."/>
            <person name="Kawakami B."/>
            <person name="Yamazaki M."/>
            <person name="Watanabe K."/>
            <person name="Kumagai A."/>
            <person name="Itakura S."/>
            <person name="Fukuzumi Y."/>
            <person name="Fujimori Y."/>
            <person name="Komiyama M."/>
            <person name="Tashiro H."/>
            <person name="Tanigami A."/>
            <person name="Fujiwara T."/>
            <person name="Ono T."/>
            <person name="Yamada K."/>
            <person name="Fujii Y."/>
            <person name="Ozaki K."/>
            <person name="Hirao M."/>
            <person name="Ohmori Y."/>
            <person name="Kawabata A."/>
            <person name="Hikiji T."/>
            <person name="Kobatake N."/>
            <person name="Inagaki H."/>
            <person name="Ikema Y."/>
            <person name="Okamoto S."/>
            <person name="Okitani R."/>
            <person name="Kawakami T."/>
            <person name="Noguchi S."/>
            <person name="Itoh T."/>
            <person name="Shigeta K."/>
            <person name="Senba T."/>
            <person name="Matsumura K."/>
            <person name="Nakajima Y."/>
            <person name="Mizuno T."/>
            <person name="Morinaga M."/>
            <person name="Sasaki M."/>
            <person name="Togashi T."/>
            <person name="Oyama M."/>
            <person name="Hata H."/>
            <person name="Watanabe M."/>
            <person name="Komatsu T."/>
            <person name="Mizushima-Sugano J."/>
            <person name="Satoh T."/>
            <person name="Shirai Y."/>
            <person name="Takahashi Y."/>
            <person name="Nakagawa K."/>
            <person name="Okumura K."/>
            <person name="Nagase T."/>
            <person name="Nomura N."/>
            <person name="Kikuchi H."/>
            <person name="Masuho Y."/>
            <person name="Yamashita R."/>
            <person name="Nakai K."/>
            <person name="Yada T."/>
            <person name="Nakamura Y."/>
            <person name="Ohara O."/>
            <person name="Isogai T."/>
            <person name="Sugano S."/>
        </authorList>
    </citation>
    <scope>NUCLEOTIDE SEQUENCE [LARGE SCALE MRNA] (ISOFORMS 1 AND 2)</scope>
    <source>
        <tissue>Placenta</tissue>
        <tissue>Testis</tissue>
    </source>
</reference>
<reference key="4">
    <citation type="journal article" date="2006" name="Nature">
        <title>The DNA sequence and biological annotation of human chromosome 1.</title>
        <authorList>
            <person name="Gregory S.G."/>
            <person name="Barlow K.F."/>
            <person name="McLay K.E."/>
            <person name="Kaul R."/>
            <person name="Swarbreck D."/>
            <person name="Dunham A."/>
            <person name="Scott C.E."/>
            <person name="Howe K.L."/>
            <person name="Woodfine K."/>
            <person name="Spencer C.C.A."/>
            <person name="Jones M.C."/>
            <person name="Gillson C."/>
            <person name="Searle S."/>
            <person name="Zhou Y."/>
            <person name="Kokocinski F."/>
            <person name="McDonald L."/>
            <person name="Evans R."/>
            <person name="Phillips K."/>
            <person name="Atkinson A."/>
            <person name="Cooper R."/>
            <person name="Jones C."/>
            <person name="Hall R.E."/>
            <person name="Andrews T.D."/>
            <person name="Lloyd C."/>
            <person name="Ainscough R."/>
            <person name="Almeida J.P."/>
            <person name="Ambrose K.D."/>
            <person name="Anderson F."/>
            <person name="Andrew R.W."/>
            <person name="Ashwell R.I.S."/>
            <person name="Aubin K."/>
            <person name="Babbage A.K."/>
            <person name="Bagguley C.L."/>
            <person name="Bailey J."/>
            <person name="Beasley H."/>
            <person name="Bethel G."/>
            <person name="Bird C.P."/>
            <person name="Bray-Allen S."/>
            <person name="Brown J.Y."/>
            <person name="Brown A.J."/>
            <person name="Buckley D."/>
            <person name="Burton J."/>
            <person name="Bye J."/>
            <person name="Carder C."/>
            <person name="Chapman J.C."/>
            <person name="Clark S.Y."/>
            <person name="Clarke G."/>
            <person name="Clee C."/>
            <person name="Cobley V."/>
            <person name="Collier R.E."/>
            <person name="Corby N."/>
            <person name="Coville G.J."/>
            <person name="Davies J."/>
            <person name="Deadman R."/>
            <person name="Dunn M."/>
            <person name="Earthrowl M."/>
            <person name="Ellington A.G."/>
            <person name="Errington H."/>
            <person name="Frankish A."/>
            <person name="Frankland J."/>
            <person name="French L."/>
            <person name="Garner P."/>
            <person name="Garnett J."/>
            <person name="Gay L."/>
            <person name="Ghori M.R.J."/>
            <person name="Gibson R."/>
            <person name="Gilby L.M."/>
            <person name="Gillett W."/>
            <person name="Glithero R.J."/>
            <person name="Grafham D.V."/>
            <person name="Griffiths C."/>
            <person name="Griffiths-Jones S."/>
            <person name="Grocock R."/>
            <person name="Hammond S."/>
            <person name="Harrison E.S.I."/>
            <person name="Hart E."/>
            <person name="Haugen E."/>
            <person name="Heath P.D."/>
            <person name="Holmes S."/>
            <person name="Holt K."/>
            <person name="Howden P.J."/>
            <person name="Hunt A.R."/>
            <person name="Hunt S.E."/>
            <person name="Hunter G."/>
            <person name="Isherwood J."/>
            <person name="James R."/>
            <person name="Johnson C."/>
            <person name="Johnson D."/>
            <person name="Joy A."/>
            <person name="Kay M."/>
            <person name="Kershaw J.K."/>
            <person name="Kibukawa M."/>
            <person name="Kimberley A.M."/>
            <person name="King A."/>
            <person name="Knights A.J."/>
            <person name="Lad H."/>
            <person name="Laird G."/>
            <person name="Lawlor S."/>
            <person name="Leongamornlert D.A."/>
            <person name="Lloyd D.M."/>
            <person name="Loveland J."/>
            <person name="Lovell J."/>
            <person name="Lush M.J."/>
            <person name="Lyne R."/>
            <person name="Martin S."/>
            <person name="Mashreghi-Mohammadi M."/>
            <person name="Matthews L."/>
            <person name="Matthews N.S.W."/>
            <person name="McLaren S."/>
            <person name="Milne S."/>
            <person name="Mistry S."/>
            <person name="Moore M.J.F."/>
            <person name="Nickerson T."/>
            <person name="O'Dell C.N."/>
            <person name="Oliver K."/>
            <person name="Palmeiri A."/>
            <person name="Palmer S.A."/>
            <person name="Parker A."/>
            <person name="Patel D."/>
            <person name="Pearce A.V."/>
            <person name="Peck A.I."/>
            <person name="Pelan S."/>
            <person name="Phelps K."/>
            <person name="Phillimore B.J."/>
            <person name="Plumb R."/>
            <person name="Rajan J."/>
            <person name="Raymond C."/>
            <person name="Rouse G."/>
            <person name="Saenphimmachak C."/>
            <person name="Sehra H.K."/>
            <person name="Sheridan E."/>
            <person name="Shownkeen R."/>
            <person name="Sims S."/>
            <person name="Skuce C.D."/>
            <person name="Smith M."/>
            <person name="Steward C."/>
            <person name="Subramanian S."/>
            <person name="Sycamore N."/>
            <person name="Tracey A."/>
            <person name="Tromans A."/>
            <person name="Van Helmond Z."/>
            <person name="Wall M."/>
            <person name="Wallis J.M."/>
            <person name="White S."/>
            <person name="Whitehead S.L."/>
            <person name="Wilkinson J.E."/>
            <person name="Willey D.L."/>
            <person name="Williams H."/>
            <person name="Wilming L."/>
            <person name="Wray P.W."/>
            <person name="Wu Z."/>
            <person name="Coulson A."/>
            <person name="Vaudin M."/>
            <person name="Sulston J.E."/>
            <person name="Durbin R.M."/>
            <person name="Hubbard T."/>
            <person name="Wooster R."/>
            <person name="Dunham I."/>
            <person name="Carter N.P."/>
            <person name="McVean G."/>
            <person name="Ross M.T."/>
            <person name="Harrow J."/>
            <person name="Olson M.V."/>
            <person name="Beck S."/>
            <person name="Rogers J."/>
            <person name="Bentley D.R."/>
        </authorList>
    </citation>
    <scope>NUCLEOTIDE SEQUENCE [LARGE SCALE GENOMIC DNA]</scope>
</reference>
<reference key="5">
    <citation type="submission" date="2005-07" db="EMBL/GenBank/DDBJ databases">
        <authorList>
            <person name="Mural R.J."/>
            <person name="Istrail S."/>
            <person name="Sutton G.G."/>
            <person name="Florea L."/>
            <person name="Halpern A.L."/>
            <person name="Mobarry C.M."/>
            <person name="Lippert R."/>
            <person name="Walenz B."/>
            <person name="Shatkay H."/>
            <person name="Dew I."/>
            <person name="Miller J.R."/>
            <person name="Flanigan M.J."/>
            <person name="Edwards N.J."/>
            <person name="Bolanos R."/>
            <person name="Fasulo D."/>
            <person name="Halldorsson B.V."/>
            <person name="Hannenhalli S."/>
            <person name="Turner R."/>
            <person name="Yooseph S."/>
            <person name="Lu F."/>
            <person name="Nusskern D.R."/>
            <person name="Shue B.C."/>
            <person name="Zheng X.H."/>
            <person name="Zhong F."/>
            <person name="Delcher A.L."/>
            <person name="Huson D.H."/>
            <person name="Kravitz S.A."/>
            <person name="Mouchard L."/>
            <person name="Reinert K."/>
            <person name="Remington K.A."/>
            <person name="Clark A.G."/>
            <person name="Waterman M.S."/>
            <person name="Eichler E.E."/>
            <person name="Adams M.D."/>
            <person name="Hunkapiller M.W."/>
            <person name="Myers E.W."/>
            <person name="Venter J.C."/>
        </authorList>
    </citation>
    <scope>NUCLEOTIDE SEQUENCE [LARGE SCALE GENOMIC DNA]</scope>
</reference>
<reference key="6">
    <citation type="journal article" date="2004" name="Genome Res.">
        <title>The status, quality, and expansion of the NIH full-length cDNA project: the Mammalian Gene Collection (MGC).</title>
        <authorList>
            <consortium name="The MGC Project Team"/>
        </authorList>
    </citation>
    <scope>NUCLEOTIDE SEQUENCE [LARGE SCALE MRNA] (ISOFORM 1)</scope>
    <source>
        <tissue>Brain</tissue>
        <tissue>Placenta</tissue>
    </source>
</reference>
<reference key="7">
    <citation type="submission" date="1999-01" db="EMBL/GenBank/DDBJ databases">
        <title>Cloning and subcellular localization of a human calcium-binding transporter.</title>
        <authorList>
            <person name="Biery B."/>
            <person name="Valle D."/>
        </authorList>
    </citation>
    <scope>NUCLEOTIDE SEQUENCE [MRNA] OF 8-477</scope>
    <source>
        <tissue>Retina</tissue>
    </source>
</reference>
<reference key="8">
    <citation type="journal article" date="2009" name="Science">
        <title>Lysine acetylation targets protein complexes and co-regulates major cellular functions.</title>
        <authorList>
            <person name="Choudhary C."/>
            <person name="Kumar C."/>
            <person name="Gnad F."/>
            <person name="Nielsen M.L."/>
            <person name="Rehman M."/>
            <person name="Walther T.C."/>
            <person name="Olsen J.V."/>
            <person name="Mann M."/>
        </authorList>
    </citation>
    <scope>ACETYLATION [LARGE SCALE ANALYSIS] AT LYS-336 AND LYS-437</scope>
    <scope>IDENTIFICATION BY MASS SPECTROMETRY [LARGE SCALE ANALYSIS]</scope>
</reference>
<reference key="9">
    <citation type="journal article" date="2011" name="BMC Syst. Biol.">
        <title>Initial characterization of the human central proteome.</title>
        <authorList>
            <person name="Burkard T.R."/>
            <person name="Planyavsky M."/>
            <person name="Kaupe I."/>
            <person name="Breitwieser F.P."/>
            <person name="Buerckstuemmer T."/>
            <person name="Bennett K.L."/>
            <person name="Superti-Furga G."/>
            <person name="Colinge J."/>
        </authorList>
    </citation>
    <scope>IDENTIFICATION BY MASS SPECTROMETRY [LARGE SCALE ANALYSIS]</scope>
</reference>
<reference key="10">
    <citation type="journal article" date="2012" name="Cell Death Differ.">
        <title>SCaMC-1 promotes cancer cell survival by desensitizing mitochondrial permeability transition via ATP/ADP-mediated matrix Ca(2+) buffering.</title>
        <authorList>
            <person name="Traba J."/>
            <person name="Del Arco A."/>
            <person name="Duchen M.R."/>
            <person name="Szabadkai G."/>
            <person name="Satrustegui J."/>
        </authorList>
    </citation>
    <scope>FUNCTION</scope>
    <scope>TRANSPORTER ACTIVITY</scope>
    <scope>ACTIVITY REGULATION</scope>
    <scope>SUBCELLULAR LOCATION</scope>
</reference>
<reference key="11">
    <citation type="journal article" date="2015" name="Proteomics">
        <title>N-terminome analysis of the human mitochondrial proteome.</title>
        <authorList>
            <person name="Vaca Jacome A.S."/>
            <person name="Rabilloud T."/>
            <person name="Schaeffer-Reiss C."/>
            <person name="Rompais M."/>
            <person name="Ayoub D."/>
            <person name="Lane L."/>
            <person name="Bairoch A."/>
            <person name="Van Dorsselaer A."/>
            <person name="Carapito C."/>
        </authorList>
    </citation>
    <scope>IDENTIFICATION BY MASS SPECTROMETRY [LARGE SCALE ANALYSIS]</scope>
</reference>
<reference evidence="19" key="12">
    <citation type="journal article" date="2014" name="Structure">
        <title>A self-sequestered calmodulin-like Ca(2+) sensor of mitochondrial SCaMC carrier and its implication to Ca(2+)-dependent ATP-Mg/Pi transport.</title>
        <authorList>
            <person name="Yang Q."/>
            <person name="Brueschweiler S."/>
            <person name="Chou J.J."/>
        </authorList>
    </citation>
    <scope>X-RAY CRYSTALLOGRAPHY (2.10 ANGSTROMS) OF 1-193 IN COMPLEX WITH CALCIUM</scope>
    <scope>NMR</scope>
    <scope>ACTIVITY REGULATION</scope>
    <scope>CALCIUM-BINDING</scope>
    <scope>DOMAIN</scope>
    <scope>REGION</scope>
</reference>
<reference evidence="20 21" key="13">
    <citation type="journal article" date="2015" name="Biochim. Biophys. Acta">
        <title>Calcium-induced conformational changes in the regulatory domain of the human mitochondrial ATP-Mg/Pi carrier.</title>
        <authorList>
            <person name="Harborne S.P."/>
            <person name="Ruprecht J.J."/>
            <person name="Kunji E.R."/>
        </authorList>
    </citation>
    <scope>X-RAY CRYSTALLOGRAPHY (2.10 ANGSTROMS) OF 14-174 IN COMPLEX WITH CALCIUM</scope>
    <scope>SUBUNIT</scope>
    <scope>ACTIVITY REGULATION</scope>
</reference>
<reference key="14">
    <citation type="journal article" date="2017" name="Am. J. Hum. Genet.">
        <title>De Novo Mutations in SLC25A24 Cause a Craniosynostosis Syndrome with Hypertrichosis, Progeroid Appearance, and Mitochondrial Dysfunction.</title>
        <authorList>
            <person name="Ehmke N."/>
            <person name="Graul-Neumann L."/>
            <person name="Smorag L."/>
            <person name="Koenig R."/>
            <person name="Segebrecht L."/>
            <person name="Magoulas P."/>
            <person name="Scaglia F."/>
            <person name="Kilic E."/>
            <person name="Hennig A.F."/>
            <person name="Adolphs N."/>
            <person name="Saha N."/>
            <person name="Fauler B."/>
            <person name="Kalscheuer V.M."/>
            <person name="Hennig F."/>
            <person name="Altmueller J."/>
            <person name="Netzer C."/>
            <person name="Thiele H."/>
            <person name="Nuernberg P."/>
            <person name="Yigit G."/>
            <person name="Jaeger M."/>
            <person name="Hecht J."/>
            <person name="Krueger U."/>
            <person name="Mielke T."/>
            <person name="Krawitz P.M."/>
            <person name="Horn D."/>
            <person name="Schuelke M."/>
            <person name="Mundlos S."/>
            <person name="Bacino C.A."/>
            <person name="Bonnen P.E."/>
            <person name="Wollnik B."/>
            <person name="Fischer-Zirnsak B."/>
            <person name="Kornak U."/>
        </authorList>
    </citation>
    <scope>INVOLVEMENT IN FPS</scope>
    <scope>VARIANTS FPS CYS-217 AND HIS-217</scope>
    <scope>CHARACTERIZATION OF VARIANTS FPS HIS-217</scope>
    <scope>FUNCTION</scope>
</reference>
<proteinExistence type="evidence at protein level"/>
<protein>
    <recommendedName>
        <fullName evidence="16">Mitochondrial adenyl nucleotide antiporter SLC25A24</fullName>
    </recommendedName>
    <alternativeName>
        <fullName evidence="13">Mitochondrial ATP-Mg/Pi carrier protein 1</fullName>
    </alternativeName>
    <alternativeName>
        <fullName>Mitochondrial Ca(2+)-dependent solute carrier protein 1</fullName>
    </alternativeName>
    <alternativeName>
        <fullName evidence="12">Short calcium-binding mitochondrial carrier protein 1</fullName>
        <shortName evidence="12">SCaMC-1</shortName>
    </alternativeName>
    <alternativeName>
        <fullName evidence="18">Solute carrier family 25 member 24</fullName>
    </alternativeName>
</protein>
<sequence>MLRWLRDFVLPTAACQDAEQPTRYETLFQALDRNGDGVVDIGELQEGLRNLGIPLGQDAEEKIFTTGDVNKDGKLDFEEFMKYLKDHEKKMKLAFKSLDKNNDGKIEASEIVQSLQTLGLTISEQQAELILQSIDVDGTMTVDWNEWRDYFLFNPVTDIEEIIRFWKHSTGIDIGDSLTIPDEFTEDEKKSGQWWRQLLAGGIAGAVSRTSTAPLDRLKIMMQVHGSKSDKMNIFGGFRQMVKEGGIRSLWRGNGTNVIKIAPETAVKFWAYEQYKKLLTEEGQKIGTFERFISGSMAGATAQTFIYPMEVMKTRLAVGKTGQYSGIYDCAKKILKHEGLGAFYKGYVPNLLGIIPYAGIDLAVYELLKSYWLDNFAKDSVNPGVMVLLGCGALSSTCGQLASYPLALVRTRMQAQAMLEGSPQLNMVGLFRRIISKEGIPGLYRGITPNFMKVLPAVGISYVVYENMKQTLGVTQK</sequence>
<accession>Q6NUK1</accession>
<accession>B7ZAI9</accession>
<accession>Q5T331</accession>
<accession>Q5T485</accession>
<accession>Q6PJJ9</accession>
<accession>Q705K4</accession>
<accession>Q9P129</accession>
<dbReference type="EMBL" id="AJ619987">
    <property type="protein sequence ID" value="CAF04493.1"/>
    <property type="molecule type" value="mRNA"/>
</dbReference>
<dbReference type="EMBL" id="AJ619961">
    <property type="protein sequence ID" value="CAF04058.1"/>
    <property type="molecule type" value="mRNA"/>
</dbReference>
<dbReference type="EMBL" id="AK292567">
    <property type="protein sequence ID" value="BAF85256.1"/>
    <property type="molecule type" value="mRNA"/>
</dbReference>
<dbReference type="EMBL" id="AK316304">
    <property type="protein sequence ID" value="BAH14675.1"/>
    <property type="molecule type" value="mRNA"/>
</dbReference>
<dbReference type="EMBL" id="AL359258">
    <property type="status" value="NOT_ANNOTATED_CDS"/>
    <property type="molecule type" value="Genomic_DNA"/>
</dbReference>
<dbReference type="EMBL" id="AL390036">
    <property type="status" value="NOT_ANNOTATED_CDS"/>
    <property type="molecule type" value="Genomic_DNA"/>
</dbReference>
<dbReference type="EMBL" id="CH471156">
    <property type="protein sequence ID" value="EAW51254.1"/>
    <property type="molecule type" value="Genomic_DNA"/>
</dbReference>
<dbReference type="EMBL" id="CH471156">
    <property type="protein sequence ID" value="EAW51255.1"/>
    <property type="molecule type" value="Genomic_DNA"/>
</dbReference>
<dbReference type="EMBL" id="BC014519">
    <property type="protein sequence ID" value="AAH14519.1"/>
    <property type="molecule type" value="mRNA"/>
</dbReference>
<dbReference type="EMBL" id="BC068561">
    <property type="protein sequence ID" value="AAH68561.1"/>
    <property type="molecule type" value="mRNA"/>
</dbReference>
<dbReference type="EMBL" id="AF123303">
    <property type="protein sequence ID" value="AAF28888.1"/>
    <property type="status" value="ALT_FRAME"/>
    <property type="molecule type" value="mRNA"/>
</dbReference>
<dbReference type="CCDS" id="CCDS41361.1">
    <molecule id="Q6NUK1-1"/>
</dbReference>
<dbReference type="CCDS" id="CCDS786.1">
    <molecule id="Q6NUK1-2"/>
</dbReference>
<dbReference type="RefSeq" id="NP_037518.3">
    <molecule id="Q6NUK1-1"/>
    <property type="nucleotide sequence ID" value="NM_013386.4"/>
</dbReference>
<dbReference type="RefSeq" id="NP_998816.1">
    <molecule id="Q6NUK1-2"/>
    <property type="nucleotide sequence ID" value="NM_213651.3"/>
</dbReference>
<dbReference type="PDB" id="4N5X">
    <property type="method" value="X-ray"/>
    <property type="resolution" value="2.10 A"/>
    <property type="chains" value="A=1-193"/>
</dbReference>
<dbReference type="PDB" id="4ZCU">
    <property type="method" value="X-ray"/>
    <property type="resolution" value="2.10 A"/>
    <property type="chains" value="A/B/C=14-174"/>
</dbReference>
<dbReference type="PDB" id="4ZCV">
    <property type="method" value="X-ray"/>
    <property type="resolution" value="2.80 A"/>
    <property type="chains" value="A/B/C/D=14-174"/>
</dbReference>
<dbReference type="PDBsum" id="4N5X"/>
<dbReference type="PDBsum" id="4ZCU"/>
<dbReference type="PDBsum" id="4ZCV"/>
<dbReference type="SMR" id="Q6NUK1"/>
<dbReference type="BioGRID" id="118993">
    <property type="interactions" value="148"/>
</dbReference>
<dbReference type="FunCoup" id="Q6NUK1">
    <property type="interactions" value="2353"/>
</dbReference>
<dbReference type="IntAct" id="Q6NUK1">
    <property type="interactions" value="52"/>
</dbReference>
<dbReference type="MINT" id="Q6NUK1"/>
<dbReference type="STRING" id="9606.ENSP00000457733"/>
<dbReference type="TCDB" id="2.A.29.23.8">
    <property type="family name" value="the mitochondrial carrier (mc) family"/>
</dbReference>
<dbReference type="GlyGen" id="Q6NUK1">
    <property type="glycosylation" value="1 site, 1 O-linked glycan (1 site)"/>
</dbReference>
<dbReference type="iPTMnet" id="Q6NUK1"/>
<dbReference type="MetOSite" id="Q6NUK1"/>
<dbReference type="PhosphoSitePlus" id="Q6NUK1"/>
<dbReference type="SwissPalm" id="Q6NUK1"/>
<dbReference type="BioMuta" id="SLC25A24"/>
<dbReference type="DMDM" id="167016554"/>
<dbReference type="jPOST" id="Q6NUK1"/>
<dbReference type="MassIVE" id="Q6NUK1"/>
<dbReference type="PaxDb" id="9606-ENSP00000457733"/>
<dbReference type="PeptideAtlas" id="Q6NUK1"/>
<dbReference type="ProteomicsDB" id="66685">
    <molecule id="Q6NUK1-1"/>
</dbReference>
<dbReference type="ProteomicsDB" id="66686">
    <molecule id="Q6NUK1-2"/>
</dbReference>
<dbReference type="Pumba" id="Q6NUK1"/>
<dbReference type="TopDownProteomics" id="Q6NUK1-1">
    <molecule id="Q6NUK1-1"/>
</dbReference>
<dbReference type="TopDownProteomics" id="Q6NUK1-2">
    <molecule id="Q6NUK1-2"/>
</dbReference>
<dbReference type="Antibodypedia" id="33722">
    <property type="antibodies" value="134 antibodies from 24 providers"/>
</dbReference>
<dbReference type="DNASU" id="29957"/>
<dbReference type="Ensembl" id="ENST00000370041.4">
    <molecule id="Q6NUK1-2"/>
    <property type="protein sequence ID" value="ENSP00000359058.4"/>
    <property type="gene ID" value="ENSG00000085491.17"/>
</dbReference>
<dbReference type="Ensembl" id="ENST00000565488.6">
    <molecule id="Q6NUK1-1"/>
    <property type="protein sequence ID" value="ENSP00000457733.1"/>
    <property type="gene ID" value="ENSG00000085491.17"/>
</dbReference>
<dbReference type="Ensembl" id="ENST00000639032.1">
    <molecule id="Q6NUK1-2"/>
    <property type="protein sequence ID" value="ENSP00000492810.1"/>
    <property type="gene ID" value="ENSG00000284468.3"/>
</dbReference>
<dbReference type="Ensembl" id="ENST00000640416.2">
    <molecule id="Q6NUK1-1"/>
    <property type="protein sequence ID" value="ENSP00000491572.1"/>
    <property type="gene ID" value="ENSG00000284468.3"/>
</dbReference>
<dbReference type="GeneID" id="29957"/>
<dbReference type="KEGG" id="hsa:29957"/>
<dbReference type="MANE-Select" id="ENST00000565488.6">
    <property type="protein sequence ID" value="ENSP00000457733.1"/>
    <property type="RefSeq nucleotide sequence ID" value="NM_013386.5"/>
    <property type="RefSeq protein sequence ID" value="NP_037518.3"/>
</dbReference>
<dbReference type="UCSC" id="uc001dvm.5">
    <molecule id="Q6NUK1-1"/>
    <property type="organism name" value="human"/>
</dbReference>
<dbReference type="AGR" id="HGNC:20662"/>
<dbReference type="CTD" id="29957"/>
<dbReference type="DisGeNET" id="29957"/>
<dbReference type="GeneCards" id="SLC25A24"/>
<dbReference type="GeneReviews" id="SLC25A24"/>
<dbReference type="HGNC" id="HGNC:20662">
    <property type="gene designation" value="SLC25A24"/>
</dbReference>
<dbReference type="HPA" id="ENSG00000085491">
    <property type="expression patterns" value="Low tissue specificity"/>
</dbReference>
<dbReference type="MalaCards" id="SLC25A24"/>
<dbReference type="MIM" id="608744">
    <property type="type" value="gene"/>
</dbReference>
<dbReference type="MIM" id="612289">
    <property type="type" value="phenotype"/>
</dbReference>
<dbReference type="neXtProt" id="NX_Q6NUK1"/>
<dbReference type="OpenTargets" id="ENSG00000085491"/>
<dbReference type="Orphanet" id="2095">
    <property type="disease" value="Gorlin-Chaudhry-Moss syndrome"/>
</dbReference>
<dbReference type="Orphanet" id="2963">
    <property type="disease" value="Progeroid syndrome, Petty type"/>
</dbReference>
<dbReference type="PharmGKB" id="PA134978257"/>
<dbReference type="VEuPathDB" id="HostDB:ENSG00000085491"/>
<dbReference type="eggNOG" id="KOG0036">
    <property type="taxonomic scope" value="Eukaryota"/>
</dbReference>
<dbReference type="GeneTree" id="ENSGT00940000158786"/>
<dbReference type="HOGENOM" id="CLU_015166_2_0_1"/>
<dbReference type="InParanoid" id="Q6NUK1"/>
<dbReference type="OMA" id="SGQWWKQ"/>
<dbReference type="OrthoDB" id="270584at2759"/>
<dbReference type="PAN-GO" id="Q6NUK1">
    <property type="GO annotations" value="1 GO annotation based on evolutionary models"/>
</dbReference>
<dbReference type="PhylomeDB" id="Q6NUK1"/>
<dbReference type="TreeFam" id="TF313492"/>
<dbReference type="PathwayCommons" id="Q6NUK1"/>
<dbReference type="SignaLink" id="Q6NUK1"/>
<dbReference type="BioGRID-ORCS" id="29957">
    <property type="hits" value="15 hits in 1163 CRISPR screens"/>
</dbReference>
<dbReference type="ChiTaRS" id="SLC25A24">
    <property type="organism name" value="human"/>
</dbReference>
<dbReference type="EvolutionaryTrace" id="Q6NUK1"/>
<dbReference type="GenomeRNAi" id="29957"/>
<dbReference type="Pharos" id="Q6NUK1">
    <property type="development level" value="Tbio"/>
</dbReference>
<dbReference type="PRO" id="PR:Q6NUK1"/>
<dbReference type="Proteomes" id="UP000005640">
    <property type="component" value="Chromosome 1"/>
</dbReference>
<dbReference type="RNAct" id="Q6NUK1">
    <property type="molecule type" value="protein"/>
</dbReference>
<dbReference type="Bgee" id="ENSG00000085491">
    <property type="expression patterns" value="Expressed in rectum and 106 other cell types or tissues"/>
</dbReference>
<dbReference type="ExpressionAtlas" id="Q6NUK1">
    <property type="expression patterns" value="baseline and differential"/>
</dbReference>
<dbReference type="GO" id="GO:0016020">
    <property type="term" value="C:membrane"/>
    <property type="evidence" value="ECO:0000314"/>
    <property type="project" value="UniProtKB"/>
</dbReference>
<dbReference type="GO" id="GO:0005743">
    <property type="term" value="C:mitochondrial inner membrane"/>
    <property type="evidence" value="ECO:0007669"/>
    <property type="project" value="UniProtKB-SubCell"/>
</dbReference>
<dbReference type="GO" id="GO:0005739">
    <property type="term" value="C:mitochondrion"/>
    <property type="evidence" value="ECO:0000314"/>
    <property type="project" value="HPA"/>
</dbReference>
<dbReference type="GO" id="GO:0000295">
    <property type="term" value="F:adenine nucleotide transmembrane transporter activity"/>
    <property type="evidence" value="ECO:0000314"/>
    <property type="project" value="UniProtKB"/>
</dbReference>
<dbReference type="GO" id="GO:0140988">
    <property type="term" value="F:ADP:phosphate antiporter activity"/>
    <property type="evidence" value="ECO:0000314"/>
    <property type="project" value="UniProtKB"/>
</dbReference>
<dbReference type="GO" id="GO:0005347">
    <property type="term" value="F:ATP transmembrane transporter activity"/>
    <property type="evidence" value="ECO:0000315"/>
    <property type="project" value="UniProtKB"/>
</dbReference>
<dbReference type="GO" id="GO:0140987">
    <property type="term" value="F:ATP:phosphate antiporter activity"/>
    <property type="evidence" value="ECO:0000314"/>
    <property type="project" value="UniProtKB"/>
</dbReference>
<dbReference type="GO" id="GO:0005509">
    <property type="term" value="F:calcium ion binding"/>
    <property type="evidence" value="ECO:0000314"/>
    <property type="project" value="UniProtKB"/>
</dbReference>
<dbReference type="GO" id="GO:0051503">
    <property type="term" value="P:adenine nucleotide transport"/>
    <property type="evidence" value="ECO:0000314"/>
    <property type="project" value="UniProtKB"/>
</dbReference>
<dbReference type="GO" id="GO:0015866">
    <property type="term" value="P:ADP transport"/>
    <property type="evidence" value="ECO:0000318"/>
    <property type="project" value="GO_Central"/>
</dbReference>
<dbReference type="GO" id="GO:0015867">
    <property type="term" value="P:ATP transport"/>
    <property type="evidence" value="ECO:0000318"/>
    <property type="project" value="GO_Central"/>
</dbReference>
<dbReference type="GO" id="GO:0071277">
    <property type="term" value="P:cellular response to calcium ion"/>
    <property type="evidence" value="ECO:0000315"/>
    <property type="project" value="UniProtKB"/>
</dbReference>
<dbReference type="GO" id="GO:0034599">
    <property type="term" value="P:cellular response to oxidative stress"/>
    <property type="evidence" value="ECO:0000315"/>
    <property type="project" value="UniProtKB"/>
</dbReference>
<dbReference type="GO" id="GO:1990544">
    <property type="term" value="P:mitochondrial ATP transmembrane transport"/>
    <property type="evidence" value="ECO:0000314"/>
    <property type="project" value="UniProtKB"/>
</dbReference>
<dbReference type="GO" id="GO:0006839">
    <property type="term" value="P:mitochondrial transport"/>
    <property type="evidence" value="ECO:0000315"/>
    <property type="project" value="UniProtKB"/>
</dbReference>
<dbReference type="DisProt" id="DP01311"/>
<dbReference type="FunFam" id="1.10.238.10:FF:000028">
    <property type="entry name" value="Putative calcium-binding mitochondrial carrier protein scamc-2"/>
    <property type="match status" value="1"/>
</dbReference>
<dbReference type="FunFam" id="1.50.40.10:FF:000003">
    <property type="entry name" value="Putative calcium-binding mitochondrial carrier protein scamc-2"/>
    <property type="match status" value="1"/>
</dbReference>
<dbReference type="FunFam" id="1.10.238.10:FF:000168">
    <property type="entry name" value="Solute carrier family 25 member 24"/>
    <property type="match status" value="1"/>
</dbReference>
<dbReference type="Gene3D" id="1.10.238.10">
    <property type="entry name" value="EF-hand"/>
    <property type="match status" value="2"/>
</dbReference>
<dbReference type="Gene3D" id="1.50.40.10">
    <property type="entry name" value="Mitochondrial carrier domain"/>
    <property type="match status" value="1"/>
</dbReference>
<dbReference type="InterPro" id="IPR011992">
    <property type="entry name" value="EF-hand-dom_pair"/>
</dbReference>
<dbReference type="InterPro" id="IPR018247">
    <property type="entry name" value="EF_Hand_1_Ca_BS"/>
</dbReference>
<dbReference type="InterPro" id="IPR002048">
    <property type="entry name" value="EF_hand_dom"/>
</dbReference>
<dbReference type="InterPro" id="IPR002167">
    <property type="entry name" value="GDC-like"/>
</dbReference>
<dbReference type="InterPro" id="IPR002067">
    <property type="entry name" value="Mit_carrier"/>
</dbReference>
<dbReference type="InterPro" id="IPR018108">
    <property type="entry name" value="Mitochondrial_sb/sol_carrier"/>
</dbReference>
<dbReference type="InterPro" id="IPR023395">
    <property type="entry name" value="Mt_carrier_dom_sf"/>
</dbReference>
<dbReference type="PANTHER" id="PTHR24089">
    <property type="entry name" value="SOLUTE CARRIER FAMILY 25"/>
    <property type="match status" value="1"/>
</dbReference>
<dbReference type="Pfam" id="PF13499">
    <property type="entry name" value="EF-hand_7"/>
    <property type="match status" value="2"/>
</dbReference>
<dbReference type="Pfam" id="PF00153">
    <property type="entry name" value="Mito_carr"/>
    <property type="match status" value="3"/>
</dbReference>
<dbReference type="PRINTS" id="PR00928">
    <property type="entry name" value="GRAVESDC"/>
</dbReference>
<dbReference type="PRINTS" id="PR00926">
    <property type="entry name" value="MITOCARRIER"/>
</dbReference>
<dbReference type="SMART" id="SM00054">
    <property type="entry name" value="EFh"/>
    <property type="match status" value="3"/>
</dbReference>
<dbReference type="SUPFAM" id="SSF47473">
    <property type="entry name" value="EF-hand"/>
    <property type="match status" value="1"/>
</dbReference>
<dbReference type="SUPFAM" id="SSF103506">
    <property type="entry name" value="Mitochondrial carrier"/>
    <property type="match status" value="1"/>
</dbReference>
<dbReference type="PROSITE" id="PS00018">
    <property type="entry name" value="EF_HAND_1"/>
    <property type="match status" value="3"/>
</dbReference>
<dbReference type="PROSITE" id="PS50222">
    <property type="entry name" value="EF_HAND_2"/>
    <property type="match status" value="4"/>
</dbReference>
<dbReference type="PROSITE" id="PS50920">
    <property type="entry name" value="SOLCAR"/>
    <property type="match status" value="3"/>
</dbReference>
<keyword id="KW-0002">3D-structure</keyword>
<keyword id="KW-0007">Acetylation</keyword>
<keyword id="KW-0025">Alternative splicing</keyword>
<keyword id="KW-0050">Antiport</keyword>
<keyword id="KW-0106">Calcium</keyword>
<keyword id="KW-0225">Disease variant</keyword>
<keyword id="KW-0472">Membrane</keyword>
<keyword id="KW-0479">Metal-binding</keyword>
<keyword id="KW-0496">Mitochondrion</keyword>
<keyword id="KW-0999">Mitochondrion inner membrane</keyword>
<keyword id="KW-1267">Proteomics identification</keyword>
<keyword id="KW-1185">Reference proteome</keyword>
<keyword id="KW-0677">Repeat</keyword>
<keyword id="KW-0812">Transmembrane</keyword>
<keyword id="KW-1133">Transmembrane helix</keyword>
<keyword id="KW-0813">Transport</keyword>
<comment type="function">
    <text evidence="6 7 10">Electroneutral antiporter that mediates the transport of adenyl nucleotides through the inner mitochondrial membrane. Originally identified as an ATP-magnesium/inorganic phosphate antiporter, it also acts as a broad specificity adenyl nucleotide antiporter. By regulating the mitochondrial matrix adenyl nucleotide pool could adapt to changing cellular energetic demands and indirectly regulate adenyl nucleotide-dependent metabolic pathways (PubMed:15123600, PubMed:22015608). In vitro, a low activity is also observed with guanyl and pyrimidine nucleotides (PubMed:15123600). May play a role in protecting cells against oxidative stress-induced cell death, by buffering calcium levels in the mitochondrial matrix through the formation of calcium-phosphate precipitates (PubMed:22015608, PubMed:29100093).</text>
</comment>
<comment type="catalytic activity">
    <reaction evidence="6">
        <text>Mg(2+)(out) + phosphate(in) + ATP(out) = Mg(2+)(in) + phosphate(out) + ATP(in)</text>
        <dbReference type="Rhea" id="RHEA:65840"/>
        <dbReference type="ChEBI" id="CHEBI:18420"/>
        <dbReference type="ChEBI" id="CHEBI:30616"/>
        <dbReference type="ChEBI" id="CHEBI:43474"/>
    </reaction>
</comment>
<comment type="catalytic activity">
    <reaction evidence="6">
        <text>ADP(out) + phosphate(in) + H(+)(out) = ADP(in) + phosphate(out) + H(+)(in)</text>
        <dbReference type="Rhea" id="RHEA:65844"/>
        <dbReference type="ChEBI" id="CHEBI:15378"/>
        <dbReference type="ChEBI" id="CHEBI:43474"/>
        <dbReference type="ChEBI" id="CHEBI:456216"/>
    </reaction>
</comment>
<comment type="catalytic activity">
    <reaction evidence="6">
        <text>AMP(out) + phosphate(in) = AMP(in) + phosphate(out)</text>
        <dbReference type="Rhea" id="RHEA:70259"/>
        <dbReference type="ChEBI" id="CHEBI:43474"/>
        <dbReference type="ChEBI" id="CHEBI:456215"/>
    </reaction>
</comment>
<comment type="catalytic activity">
    <reaction evidence="6 7">
        <text>phosphate(in) + ATP(out) + 2 H(+)(out) = phosphate(out) + ATP(in) + 2 H(+)(in)</text>
        <dbReference type="Rhea" id="RHEA:72035"/>
        <dbReference type="ChEBI" id="CHEBI:15378"/>
        <dbReference type="ChEBI" id="CHEBI:30616"/>
        <dbReference type="ChEBI" id="CHEBI:43474"/>
    </reaction>
</comment>
<comment type="catalytic activity">
    <reaction evidence="6">
        <text>dADP(in) + ADP(out) = dADP(out) + ADP(in)</text>
        <dbReference type="Rhea" id="RHEA:72855"/>
        <dbReference type="ChEBI" id="CHEBI:57667"/>
        <dbReference type="ChEBI" id="CHEBI:456216"/>
    </reaction>
</comment>
<comment type="catalytic activity">
    <reaction evidence="6">
        <text>Mg(2+)(in) + ADP(out) + ATP(in) + H(+)(out) = Mg(2+)(out) + ADP(in) + ATP(out) + H(+)(in)</text>
        <dbReference type="Rhea" id="RHEA:73659"/>
        <dbReference type="ChEBI" id="CHEBI:15378"/>
        <dbReference type="ChEBI" id="CHEBI:18420"/>
        <dbReference type="ChEBI" id="CHEBI:30616"/>
        <dbReference type="ChEBI" id="CHEBI:456216"/>
    </reaction>
</comment>
<comment type="catalytic activity">
    <reaction evidence="6">
        <text>ADP(out) + diphosphate(in) = ADP(in) + diphosphate(out)</text>
        <dbReference type="Rhea" id="RHEA:73671"/>
        <dbReference type="ChEBI" id="CHEBI:33019"/>
        <dbReference type="ChEBI" id="CHEBI:456216"/>
    </reaction>
</comment>
<comment type="catalytic activity">
    <reaction evidence="6">
        <text>dAMP(in) + ADP(out) + H(+)(out) = dAMP(out) + ADP(in) + H(+)(in)</text>
        <dbReference type="Rhea" id="RHEA:73675"/>
        <dbReference type="ChEBI" id="CHEBI:15378"/>
        <dbReference type="ChEBI" id="CHEBI:58245"/>
        <dbReference type="ChEBI" id="CHEBI:456216"/>
    </reaction>
</comment>
<comment type="catalytic activity">
    <reaction evidence="6">
        <text>3'-AMP(in) + ADP(out) + H(+)(out) = 3'-AMP(out) + ADP(in) + H(+)(in)</text>
        <dbReference type="Rhea" id="RHEA:73679"/>
        <dbReference type="ChEBI" id="CHEBI:15378"/>
        <dbReference type="ChEBI" id="CHEBI:60880"/>
        <dbReference type="ChEBI" id="CHEBI:456216"/>
    </reaction>
</comment>
<comment type="catalytic activity">
    <reaction evidence="6">
        <text>dAMP(out) + phosphate(in) = dAMP(in) + phosphate(out)</text>
        <dbReference type="Rhea" id="RHEA:73687"/>
        <dbReference type="ChEBI" id="CHEBI:43474"/>
        <dbReference type="ChEBI" id="CHEBI:58245"/>
    </reaction>
</comment>
<comment type="catalytic activity">
    <reaction evidence="6">
        <text>3'-AMP(out) + phosphate(in) = 3'-AMP(in) + phosphate(out)</text>
        <dbReference type="Rhea" id="RHEA:73691"/>
        <dbReference type="ChEBI" id="CHEBI:43474"/>
        <dbReference type="ChEBI" id="CHEBI:60880"/>
    </reaction>
</comment>
<comment type="catalytic activity">
    <reaction evidence="6">
        <text>dADP(out) + phosphate(in) + H(+)(out) = dADP(in) + phosphate(out) + H(+)(in)</text>
        <dbReference type="Rhea" id="RHEA:73695"/>
        <dbReference type="ChEBI" id="CHEBI:15378"/>
        <dbReference type="ChEBI" id="CHEBI:43474"/>
        <dbReference type="ChEBI" id="CHEBI:57667"/>
    </reaction>
</comment>
<comment type="activity regulation">
    <text evidence="6 7 8 9">Activated by an increase in cytosolic calcium levels that induce a conformational change of the N-terminal regulatory domain, uncapping the channel and allowing transport (PubMed:22015608, PubMed:24332718, PubMed:26164100). Inhibited by bathophenanthroline, mersalyl, p-hydroxymercuribenzoate, bromcresol purple and tannic acid (PubMed:15123600).</text>
</comment>
<comment type="biophysicochemical properties">
    <kinetics>
        <KM evidence="6">0.97 mM for AMP</KM>
        <KM evidence="6">0.3 mM for ADP</KM>
        <KM evidence="6">0.33 mM for ATP</KM>
        <KM evidence="6">0.2 mM for ATP-Mg</KM>
        <KM evidence="6">1.64 mM for Pi</KM>
        <Vmax evidence="6">337.0 umol/min/g enzyme for AMP antiport</Vmax>
        <Vmax evidence="6">345.0 umol/min/g enzyme for ADP antiport</Vmax>
        <Vmax evidence="6">320.0 umol/min/g enzyme for ATP antiport</Vmax>
        <Vmax evidence="6">365.0 umol/min/g enzyme for ATP-Mg antiport</Vmax>
        <Vmax evidence="6">380.0 umol/min/g enzyme for inorganic phosphate antiport</Vmax>
        <Vmax evidence="6">193.0 umol/min/g enzyme for ATP-Mg:ATP-Mg antiport</Vmax>
        <Vmax evidence="6">145.0 umol/min/g enzyme for ATP-Mg:ATP antiport</Vmax>
        <Vmax evidence="6">120.0 umol/min/g enzyme for ATP-Mg:phosphate antiport</Vmax>
        <Vmax evidence="6">200.0 umol/min/g enzyme for ATP:ATP-Mg antiport</Vmax>
        <Vmax evidence="6">154.0 umol/min/g enzyme for ATP:ATP antiport</Vmax>
        <Vmax evidence="6">107.0 umol/min/g enzyme for ATP:inorganic phosphate antiport</Vmax>
    </kinetics>
</comment>
<comment type="subunit">
    <text evidence="9">Monomer.</text>
</comment>
<comment type="subcellular location">
    <subcellularLocation>
        <location evidence="15 16 17">Mitochondrion inner membrane</location>
        <topology evidence="2">Multi-pass membrane protein</topology>
    </subcellularLocation>
</comment>
<comment type="alternative products">
    <event type="alternative splicing"/>
    <isoform>
        <id>Q6NUK1-1</id>
        <name>1</name>
        <sequence type="displayed"/>
    </isoform>
    <isoform>
        <id>Q6NUK1-2</id>
        <name>2</name>
        <sequence type="described" ref="VSP_031066"/>
    </isoform>
</comment>
<comment type="tissue specificity">
    <text evidence="5 6">Expressed in all tissues tested. Highly expressed in testis, expressed at intermediate level in small intestine and pancreas, and weakly expressed in kidney, spleen, liver, skeletal muscle and heart.</text>
</comment>
<comment type="domain">
    <text evidence="8">The regulatory N-terminal domain/NTD formed of two pairs of fused calcium-binding EF-hands, binds calcium in the mitochondrial intermembrane space and regulates the antiporter activity of the transmembrane domain/TMD. In absence of calcium, the apo form of the N-terminal domain is intrinsically disordered and binds to the transmembrane domain, inhibiting the transporter activity. Binding of calcium leads to a major conformational change and abolishes the interaction with the transmembrane domain and the inhibition of the transporter activity (PubMed:24332718).</text>
</comment>
<comment type="domain">
    <text evidence="8">The C-terminal mitochondrial carrier domain/transmembrane domain/TMD bears the transmembrane transporter activity.</text>
</comment>
<comment type="domain">
    <text evidence="8">Linker region/H9 could directly block the transport of substrates across the transporter.</text>
</comment>
<comment type="disease" evidence="10">
    <disease id="DI-05183">
        <name>Fontaine progeroid syndrome</name>
        <acronym>FPS</acronym>
        <description>An autosomal dominant progeroid disorder characterized by prenatal and postnatal growth retardation, decreased subcutaneous fat tissue, wrinkled skin, an aged appearance since birth, an abnormal scalp hair pattern, sparse hair, hypoplastic distal phalanges with hypoplastic nails, a widely open anterior fontanel, facial dysmorphisms, and craniosynostosis. Early death is observed in some patients.</description>
        <dbReference type="MIM" id="612289"/>
    </disease>
    <text>The disease is caused by variants affecting the gene represented in this entry.</text>
</comment>
<comment type="similarity">
    <text evidence="14">Belongs to the mitochondrial carrier (TC 2.A.29) family.</text>
</comment>
<comment type="sequence caution" evidence="14">
    <conflict type="frameshift">
        <sequence resource="EMBL-CDS" id="AAF28888"/>
    </conflict>
</comment>
<organism>
    <name type="scientific">Homo sapiens</name>
    <name type="common">Human</name>
    <dbReference type="NCBI Taxonomy" id="9606"/>
    <lineage>
        <taxon>Eukaryota</taxon>
        <taxon>Metazoa</taxon>
        <taxon>Chordata</taxon>
        <taxon>Craniata</taxon>
        <taxon>Vertebrata</taxon>
        <taxon>Euteleostomi</taxon>
        <taxon>Mammalia</taxon>
        <taxon>Eutheria</taxon>
        <taxon>Euarchontoglires</taxon>
        <taxon>Primates</taxon>
        <taxon>Haplorrhini</taxon>
        <taxon>Catarrhini</taxon>
        <taxon>Hominidae</taxon>
        <taxon>Homo</taxon>
    </lineage>
</organism>
<name>SCMC1_HUMAN</name>